<evidence type="ECO:0000255" key="1">
    <source>
        <dbReference type="HAMAP-Rule" id="MF_00248"/>
    </source>
</evidence>
<organism>
    <name type="scientific">Actinobacillus pleuropneumoniae serotype 5b (strain L20)</name>
    <dbReference type="NCBI Taxonomy" id="416269"/>
    <lineage>
        <taxon>Bacteria</taxon>
        <taxon>Pseudomonadati</taxon>
        <taxon>Pseudomonadota</taxon>
        <taxon>Gammaproteobacteria</taxon>
        <taxon>Pasteurellales</taxon>
        <taxon>Pasteurellaceae</taxon>
        <taxon>Actinobacillus</taxon>
    </lineage>
</organism>
<comment type="function">
    <text evidence="1">Protease subunit of a proteasome-like degradation complex believed to be a general protein degrading machinery.</text>
</comment>
<comment type="catalytic activity">
    <reaction evidence="1">
        <text>ATP-dependent cleavage of peptide bonds with broad specificity.</text>
        <dbReference type="EC" id="3.4.25.2"/>
    </reaction>
</comment>
<comment type="activity regulation">
    <text evidence="1">Allosterically activated by HslU binding.</text>
</comment>
<comment type="subunit">
    <text evidence="1">A double ring-shaped homohexamer of HslV is capped on each side by a ring-shaped HslU homohexamer. The assembly of the HslU/HslV complex is dependent on binding of ATP.</text>
</comment>
<comment type="subcellular location">
    <subcellularLocation>
        <location evidence="1">Cytoplasm</location>
    </subcellularLocation>
</comment>
<comment type="similarity">
    <text evidence="1">Belongs to the peptidase T1B family. HslV subfamily.</text>
</comment>
<proteinExistence type="inferred from homology"/>
<feature type="chain" id="PRO_1000012569" description="ATP-dependent protease subunit HslV">
    <location>
        <begin position="1"/>
        <end position="173"/>
    </location>
</feature>
<feature type="active site" evidence="1">
    <location>
        <position position="2"/>
    </location>
</feature>
<feature type="binding site" evidence="1">
    <location>
        <position position="158"/>
    </location>
    <ligand>
        <name>Na(+)</name>
        <dbReference type="ChEBI" id="CHEBI:29101"/>
    </ligand>
</feature>
<feature type="binding site" evidence="1">
    <location>
        <position position="161"/>
    </location>
    <ligand>
        <name>Na(+)</name>
        <dbReference type="ChEBI" id="CHEBI:29101"/>
    </ligand>
</feature>
<feature type="binding site" evidence="1">
    <location>
        <position position="164"/>
    </location>
    <ligand>
        <name>Na(+)</name>
        <dbReference type="ChEBI" id="CHEBI:29101"/>
    </ligand>
</feature>
<dbReference type="EC" id="3.4.25.2" evidence="1"/>
<dbReference type="EMBL" id="CP000569">
    <property type="protein sequence ID" value="ABN74820.1"/>
    <property type="molecule type" value="Genomic_DNA"/>
</dbReference>
<dbReference type="RefSeq" id="WP_005618211.1">
    <property type="nucleotide sequence ID" value="NC_009053.1"/>
</dbReference>
<dbReference type="SMR" id="A3N334"/>
<dbReference type="STRING" id="416269.APL_1736"/>
<dbReference type="MEROPS" id="T01.006"/>
<dbReference type="EnsemblBacteria" id="ABN74820">
    <property type="protein sequence ID" value="ABN74820"/>
    <property type="gene ID" value="APL_1736"/>
</dbReference>
<dbReference type="KEGG" id="apl:APL_1736"/>
<dbReference type="eggNOG" id="COG5405">
    <property type="taxonomic scope" value="Bacteria"/>
</dbReference>
<dbReference type="HOGENOM" id="CLU_093872_1_0_6"/>
<dbReference type="Proteomes" id="UP000001432">
    <property type="component" value="Chromosome"/>
</dbReference>
<dbReference type="GO" id="GO:0009376">
    <property type="term" value="C:HslUV protease complex"/>
    <property type="evidence" value="ECO:0007669"/>
    <property type="project" value="UniProtKB-UniRule"/>
</dbReference>
<dbReference type="GO" id="GO:0005839">
    <property type="term" value="C:proteasome core complex"/>
    <property type="evidence" value="ECO:0007669"/>
    <property type="project" value="InterPro"/>
</dbReference>
<dbReference type="GO" id="GO:0046872">
    <property type="term" value="F:metal ion binding"/>
    <property type="evidence" value="ECO:0007669"/>
    <property type="project" value="UniProtKB-KW"/>
</dbReference>
<dbReference type="GO" id="GO:0004298">
    <property type="term" value="F:threonine-type endopeptidase activity"/>
    <property type="evidence" value="ECO:0007669"/>
    <property type="project" value="UniProtKB-KW"/>
</dbReference>
<dbReference type="GO" id="GO:0051603">
    <property type="term" value="P:proteolysis involved in protein catabolic process"/>
    <property type="evidence" value="ECO:0007669"/>
    <property type="project" value="InterPro"/>
</dbReference>
<dbReference type="CDD" id="cd01913">
    <property type="entry name" value="protease_HslV"/>
    <property type="match status" value="1"/>
</dbReference>
<dbReference type="FunFam" id="3.60.20.10:FF:000002">
    <property type="entry name" value="ATP-dependent protease subunit HslV"/>
    <property type="match status" value="1"/>
</dbReference>
<dbReference type="Gene3D" id="3.60.20.10">
    <property type="entry name" value="Glutamine Phosphoribosylpyrophosphate, subunit 1, domain 1"/>
    <property type="match status" value="1"/>
</dbReference>
<dbReference type="HAMAP" id="MF_00248">
    <property type="entry name" value="HslV"/>
    <property type="match status" value="1"/>
</dbReference>
<dbReference type="InterPro" id="IPR022281">
    <property type="entry name" value="ATP-dep_Prtase_HsIV_su"/>
</dbReference>
<dbReference type="InterPro" id="IPR029055">
    <property type="entry name" value="Ntn_hydrolases_N"/>
</dbReference>
<dbReference type="InterPro" id="IPR001353">
    <property type="entry name" value="Proteasome_sua/b"/>
</dbReference>
<dbReference type="InterPro" id="IPR023333">
    <property type="entry name" value="Proteasome_suB-type"/>
</dbReference>
<dbReference type="NCBIfam" id="TIGR03692">
    <property type="entry name" value="ATP_dep_HslV"/>
    <property type="match status" value="1"/>
</dbReference>
<dbReference type="NCBIfam" id="NF003964">
    <property type="entry name" value="PRK05456.1"/>
    <property type="match status" value="1"/>
</dbReference>
<dbReference type="PANTHER" id="PTHR32194:SF0">
    <property type="entry name" value="ATP-DEPENDENT PROTEASE SUBUNIT HSLV"/>
    <property type="match status" value="1"/>
</dbReference>
<dbReference type="PANTHER" id="PTHR32194">
    <property type="entry name" value="METALLOPROTEASE TLDD"/>
    <property type="match status" value="1"/>
</dbReference>
<dbReference type="Pfam" id="PF00227">
    <property type="entry name" value="Proteasome"/>
    <property type="match status" value="1"/>
</dbReference>
<dbReference type="PIRSF" id="PIRSF039093">
    <property type="entry name" value="HslV"/>
    <property type="match status" value="1"/>
</dbReference>
<dbReference type="SUPFAM" id="SSF56235">
    <property type="entry name" value="N-terminal nucleophile aminohydrolases (Ntn hydrolases)"/>
    <property type="match status" value="1"/>
</dbReference>
<dbReference type="PROSITE" id="PS51476">
    <property type="entry name" value="PROTEASOME_BETA_2"/>
    <property type="match status" value="1"/>
</dbReference>
<reference key="1">
    <citation type="journal article" date="2008" name="J. Bacteriol.">
        <title>The complete genome sequence of Actinobacillus pleuropneumoniae L20 (serotype 5b).</title>
        <authorList>
            <person name="Foote S.J."/>
            <person name="Bosse J.T."/>
            <person name="Bouevitch A.B."/>
            <person name="Langford P.R."/>
            <person name="Young N.M."/>
            <person name="Nash J.H.E."/>
        </authorList>
    </citation>
    <scope>NUCLEOTIDE SEQUENCE [LARGE SCALE GENOMIC DNA]</scope>
    <source>
        <strain>L20</strain>
    </source>
</reference>
<keyword id="KW-0021">Allosteric enzyme</keyword>
<keyword id="KW-0963">Cytoplasm</keyword>
<keyword id="KW-0378">Hydrolase</keyword>
<keyword id="KW-0479">Metal-binding</keyword>
<keyword id="KW-0645">Protease</keyword>
<keyword id="KW-1185">Reference proteome</keyword>
<keyword id="KW-0915">Sodium</keyword>
<keyword id="KW-0888">Threonine protease</keyword>
<name>HSLV_ACTP2</name>
<accession>A3N334</accession>
<gene>
    <name evidence="1" type="primary">hslV</name>
    <name type="ordered locus">APL_1736</name>
</gene>
<sequence>MTTIVCVRKDGKVAIGGDGQATLGNCVEKGTVRKVRRMYKDKVVTGFAGSTADAFILRDLFEKKLELHQGHLIKSAVELAKEWRTERSLRKLEAMMIVANESEFLLVSGSGDVIEPEQDVLAIGSGGNYAKAAALALLRTENNLSAKEIVAEALKIAGDIDIYSNHNHVIEEV</sequence>
<protein>
    <recommendedName>
        <fullName evidence="1">ATP-dependent protease subunit HslV</fullName>
        <ecNumber evidence="1">3.4.25.2</ecNumber>
    </recommendedName>
</protein>